<keyword id="KW-0067">ATP-binding</keyword>
<keyword id="KW-0143">Chaperone</keyword>
<keyword id="KW-0547">Nucleotide-binding</keyword>
<keyword id="KW-0597">Phosphoprotein</keyword>
<keyword id="KW-1185">Reference proteome</keyword>
<keyword id="KW-0346">Stress response</keyword>
<accession>Q0K757</accession>
<proteinExistence type="inferred from homology"/>
<reference key="1">
    <citation type="journal article" date="2006" name="Nat. Biotechnol.">
        <title>Genome sequence of the bioplastic-producing 'Knallgas' bacterium Ralstonia eutropha H16.</title>
        <authorList>
            <person name="Pohlmann A."/>
            <person name="Fricke W.F."/>
            <person name="Reinecke F."/>
            <person name="Kusian B."/>
            <person name="Liesegang H."/>
            <person name="Cramm R."/>
            <person name="Eitinger T."/>
            <person name="Ewering C."/>
            <person name="Poetter M."/>
            <person name="Schwartz E."/>
            <person name="Strittmatter A."/>
            <person name="Voss I."/>
            <person name="Gottschalk G."/>
            <person name="Steinbuechel A."/>
            <person name="Friedrich B."/>
            <person name="Bowien B."/>
        </authorList>
    </citation>
    <scope>NUCLEOTIDE SEQUENCE [LARGE SCALE GENOMIC DNA]</scope>
    <source>
        <strain>ATCC 17699 / DSM 428 / KCTC 22496 / NCIMB 10442 / H16 / Stanier 337</strain>
    </source>
</reference>
<protein>
    <recommendedName>
        <fullName evidence="1">Chaperone protein DnaK</fullName>
    </recommendedName>
    <alternativeName>
        <fullName evidence="1">HSP70</fullName>
    </alternativeName>
    <alternativeName>
        <fullName evidence="1">Heat shock 70 kDa protein</fullName>
    </alternativeName>
    <alternativeName>
        <fullName evidence="1">Heat shock protein 70</fullName>
    </alternativeName>
</protein>
<sequence length="650" mass="69907">MGKIIGIDLGTTNSCVAILEGNTPKVIENSEGARTTPSIIAYMEDGEILVGAPAKRQAVTNPRNTLYAVKRLIGRKFEEKEVQKDIGLMPYSIVKADNGDAWVSVRDQKLAPPQVSAEVLRKMKKTAEDYLGEPVTEAVITVPAYFNDSQRQATKDAGRIAGLDVKRIINEPTAAALAFGMDKNEKGDRKIAVYDLGGGTFDISIIEIADVDGEKQFEVLSTNGDTFLGGEDFDQRIIDYIISEFKKDQGVDLSKDVLALQRLKEAAEKAKIELSSSQQTEINLPYITADASGPKHLNLKMTRAKLESLVEELITRTIEPCRIAIKDAGVKVSDIDDVILVGGMTRMPKVQEQVKEFFGKEARKDVNPDEAVAVGAAIQGSVLSGDRTDVLLLDVTPLSLGIETLGGVMTKMITKNTTIPTKHAQVFSTADDNQPAVTIKVFQGEREMASGNKLLGEFNLEGIPPAARGTPQIEVSFDIDANGILHVGAKDKATGKENRITIKANSGLSEDEIQRMVKDAEANAEEDKKARELADARNQADALIHSTKKALTEYGDKLEAGEKEKIEAAIKELEDAARGGDKAEIDAKVNALSEVSQKLGEKVYADMQAKAGEGATAGAAAGAGAAGGQQAQPQDDNVVDAEFKEVNDKK</sequence>
<feature type="chain" id="PRO_1000059639" description="Chaperone protein DnaK">
    <location>
        <begin position="1"/>
        <end position="650"/>
    </location>
</feature>
<feature type="region of interest" description="Disordered" evidence="2">
    <location>
        <begin position="612"/>
        <end position="650"/>
    </location>
</feature>
<feature type="compositionally biased region" description="Low complexity" evidence="2">
    <location>
        <begin position="612"/>
        <end position="632"/>
    </location>
</feature>
<feature type="compositionally biased region" description="Basic and acidic residues" evidence="2">
    <location>
        <begin position="641"/>
        <end position="650"/>
    </location>
</feature>
<feature type="modified residue" description="Phosphothreonine; by autocatalysis" evidence="1">
    <location>
        <position position="200"/>
    </location>
</feature>
<comment type="function">
    <text evidence="1">Acts as a chaperone.</text>
</comment>
<comment type="induction">
    <text evidence="1">By stress conditions e.g. heat shock.</text>
</comment>
<comment type="similarity">
    <text evidence="1">Belongs to the heat shock protein 70 family.</text>
</comment>
<organism>
    <name type="scientific">Cupriavidus necator (strain ATCC 17699 / DSM 428 / KCTC 22496 / NCIMB 10442 / H16 / Stanier 337)</name>
    <name type="common">Ralstonia eutropha</name>
    <dbReference type="NCBI Taxonomy" id="381666"/>
    <lineage>
        <taxon>Bacteria</taxon>
        <taxon>Pseudomonadati</taxon>
        <taxon>Pseudomonadota</taxon>
        <taxon>Betaproteobacteria</taxon>
        <taxon>Burkholderiales</taxon>
        <taxon>Burkholderiaceae</taxon>
        <taxon>Cupriavidus</taxon>
    </lineage>
</organism>
<name>DNAK_CUPNH</name>
<gene>
    <name evidence="1" type="primary">dnaK</name>
    <name type="ordered locus">H16_A3089</name>
</gene>
<dbReference type="EMBL" id="AM260479">
    <property type="protein sequence ID" value="CAJ94164.1"/>
    <property type="molecule type" value="Genomic_DNA"/>
</dbReference>
<dbReference type="RefSeq" id="WP_010815035.1">
    <property type="nucleotide sequence ID" value="NZ_CP039287.1"/>
</dbReference>
<dbReference type="SMR" id="Q0K757"/>
<dbReference type="STRING" id="381666.H16_A3089"/>
<dbReference type="KEGG" id="reh:H16_A3089"/>
<dbReference type="eggNOG" id="COG0443">
    <property type="taxonomic scope" value="Bacteria"/>
</dbReference>
<dbReference type="HOGENOM" id="CLU_005965_2_1_4"/>
<dbReference type="OrthoDB" id="9766019at2"/>
<dbReference type="Proteomes" id="UP000008210">
    <property type="component" value="Chromosome 1"/>
</dbReference>
<dbReference type="GO" id="GO:0005524">
    <property type="term" value="F:ATP binding"/>
    <property type="evidence" value="ECO:0007669"/>
    <property type="project" value="UniProtKB-UniRule"/>
</dbReference>
<dbReference type="GO" id="GO:0140662">
    <property type="term" value="F:ATP-dependent protein folding chaperone"/>
    <property type="evidence" value="ECO:0007669"/>
    <property type="project" value="InterPro"/>
</dbReference>
<dbReference type="GO" id="GO:0051082">
    <property type="term" value="F:unfolded protein binding"/>
    <property type="evidence" value="ECO:0007669"/>
    <property type="project" value="InterPro"/>
</dbReference>
<dbReference type="FunFam" id="2.60.34.10:FF:000014">
    <property type="entry name" value="Chaperone protein DnaK HSP70"/>
    <property type="match status" value="1"/>
</dbReference>
<dbReference type="FunFam" id="1.20.1270.10:FF:000001">
    <property type="entry name" value="Molecular chaperone DnaK"/>
    <property type="match status" value="1"/>
</dbReference>
<dbReference type="FunFam" id="3.30.420.40:FF:000004">
    <property type="entry name" value="Molecular chaperone DnaK"/>
    <property type="match status" value="1"/>
</dbReference>
<dbReference type="FunFam" id="3.90.640.10:FF:000003">
    <property type="entry name" value="Molecular chaperone DnaK"/>
    <property type="match status" value="1"/>
</dbReference>
<dbReference type="Gene3D" id="1.20.1270.10">
    <property type="match status" value="1"/>
</dbReference>
<dbReference type="Gene3D" id="3.30.420.40">
    <property type="match status" value="2"/>
</dbReference>
<dbReference type="Gene3D" id="3.90.640.10">
    <property type="entry name" value="Actin, Chain A, domain 4"/>
    <property type="match status" value="1"/>
</dbReference>
<dbReference type="Gene3D" id="2.60.34.10">
    <property type="entry name" value="Substrate Binding Domain Of DNAk, Chain A, domain 1"/>
    <property type="match status" value="1"/>
</dbReference>
<dbReference type="HAMAP" id="MF_00332">
    <property type="entry name" value="DnaK"/>
    <property type="match status" value="1"/>
</dbReference>
<dbReference type="InterPro" id="IPR043129">
    <property type="entry name" value="ATPase_NBD"/>
</dbReference>
<dbReference type="InterPro" id="IPR012725">
    <property type="entry name" value="Chaperone_DnaK"/>
</dbReference>
<dbReference type="InterPro" id="IPR018181">
    <property type="entry name" value="Heat_shock_70_CS"/>
</dbReference>
<dbReference type="InterPro" id="IPR029048">
    <property type="entry name" value="HSP70_C_sf"/>
</dbReference>
<dbReference type="InterPro" id="IPR029047">
    <property type="entry name" value="HSP70_peptide-bd_sf"/>
</dbReference>
<dbReference type="InterPro" id="IPR013126">
    <property type="entry name" value="Hsp_70_fam"/>
</dbReference>
<dbReference type="NCBIfam" id="NF001413">
    <property type="entry name" value="PRK00290.1"/>
    <property type="match status" value="1"/>
</dbReference>
<dbReference type="NCBIfam" id="NF003520">
    <property type="entry name" value="PRK05183.1"/>
    <property type="match status" value="1"/>
</dbReference>
<dbReference type="NCBIfam" id="TIGR02350">
    <property type="entry name" value="prok_dnaK"/>
    <property type="match status" value="1"/>
</dbReference>
<dbReference type="PANTHER" id="PTHR19375">
    <property type="entry name" value="HEAT SHOCK PROTEIN 70KDA"/>
    <property type="match status" value="1"/>
</dbReference>
<dbReference type="Pfam" id="PF00012">
    <property type="entry name" value="HSP70"/>
    <property type="match status" value="1"/>
</dbReference>
<dbReference type="PRINTS" id="PR00301">
    <property type="entry name" value="HEATSHOCK70"/>
</dbReference>
<dbReference type="SUPFAM" id="SSF53067">
    <property type="entry name" value="Actin-like ATPase domain"/>
    <property type="match status" value="2"/>
</dbReference>
<dbReference type="SUPFAM" id="SSF100934">
    <property type="entry name" value="Heat shock protein 70kD (HSP70), C-terminal subdomain"/>
    <property type="match status" value="1"/>
</dbReference>
<dbReference type="SUPFAM" id="SSF100920">
    <property type="entry name" value="Heat shock protein 70kD (HSP70), peptide-binding domain"/>
    <property type="match status" value="1"/>
</dbReference>
<dbReference type="PROSITE" id="PS00297">
    <property type="entry name" value="HSP70_1"/>
    <property type="match status" value="1"/>
</dbReference>
<dbReference type="PROSITE" id="PS00329">
    <property type="entry name" value="HSP70_2"/>
    <property type="match status" value="1"/>
</dbReference>
<dbReference type="PROSITE" id="PS01036">
    <property type="entry name" value="HSP70_3"/>
    <property type="match status" value="1"/>
</dbReference>
<evidence type="ECO:0000255" key="1">
    <source>
        <dbReference type="HAMAP-Rule" id="MF_00332"/>
    </source>
</evidence>
<evidence type="ECO:0000256" key="2">
    <source>
        <dbReference type="SAM" id="MobiDB-lite"/>
    </source>
</evidence>